<dbReference type="EMBL" id="CR936257">
    <property type="protein sequence ID" value="CAI48152.1"/>
    <property type="molecule type" value="Genomic_DNA"/>
</dbReference>
<dbReference type="RefSeq" id="WP_011321791.1">
    <property type="nucleotide sequence ID" value="NC_007426.1"/>
</dbReference>
<dbReference type="SMR" id="Q3IUM8"/>
<dbReference type="STRING" id="348780.NP_0122A"/>
<dbReference type="EnsemblBacteria" id="CAI48152">
    <property type="protein sequence ID" value="CAI48152"/>
    <property type="gene ID" value="NP_0122A"/>
</dbReference>
<dbReference type="KEGG" id="nph:NP_0122A"/>
<dbReference type="eggNOG" id="arCOG04255">
    <property type="taxonomic scope" value="Archaea"/>
</dbReference>
<dbReference type="HOGENOM" id="CLU_115574_0_1_2"/>
<dbReference type="OrthoDB" id="45154at2157"/>
<dbReference type="Proteomes" id="UP000002698">
    <property type="component" value="Chromosome"/>
</dbReference>
<dbReference type="GO" id="GO:0015935">
    <property type="term" value="C:small ribosomal subunit"/>
    <property type="evidence" value="ECO:0007669"/>
    <property type="project" value="InterPro"/>
</dbReference>
<dbReference type="GO" id="GO:0019843">
    <property type="term" value="F:rRNA binding"/>
    <property type="evidence" value="ECO:0007669"/>
    <property type="project" value="UniProtKB-UniRule"/>
</dbReference>
<dbReference type="GO" id="GO:0003735">
    <property type="term" value="F:structural constituent of ribosome"/>
    <property type="evidence" value="ECO:0007669"/>
    <property type="project" value="InterPro"/>
</dbReference>
<dbReference type="GO" id="GO:0006412">
    <property type="term" value="P:translation"/>
    <property type="evidence" value="ECO:0007669"/>
    <property type="project" value="UniProtKB-UniRule"/>
</dbReference>
<dbReference type="CDD" id="cd03367">
    <property type="entry name" value="Ribosomal_S23"/>
    <property type="match status" value="1"/>
</dbReference>
<dbReference type="FunFam" id="2.40.50.140:FF:000007">
    <property type="entry name" value="40S ribosomal protein S23"/>
    <property type="match status" value="1"/>
</dbReference>
<dbReference type="Gene3D" id="2.40.50.140">
    <property type="entry name" value="Nucleic acid-binding proteins"/>
    <property type="match status" value="1"/>
</dbReference>
<dbReference type="HAMAP" id="MF_00403_A">
    <property type="entry name" value="Ribosomal_uS12_A"/>
    <property type="match status" value="1"/>
</dbReference>
<dbReference type="InterPro" id="IPR012340">
    <property type="entry name" value="NA-bd_OB-fold"/>
</dbReference>
<dbReference type="InterPro" id="IPR006032">
    <property type="entry name" value="Ribosomal_uS12"/>
</dbReference>
<dbReference type="InterPro" id="IPR022863">
    <property type="entry name" value="Ribosomal_uS12_arc"/>
</dbReference>
<dbReference type="InterPro" id="IPR005680">
    <property type="entry name" value="Ribosomal_uS12_euk/arc"/>
</dbReference>
<dbReference type="NCBIfam" id="NF003254">
    <property type="entry name" value="PRK04211.1"/>
    <property type="match status" value="1"/>
</dbReference>
<dbReference type="NCBIfam" id="TIGR00982">
    <property type="entry name" value="uS12_E_A"/>
    <property type="match status" value="1"/>
</dbReference>
<dbReference type="PANTHER" id="PTHR11652">
    <property type="entry name" value="30S RIBOSOMAL PROTEIN S12 FAMILY MEMBER"/>
    <property type="match status" value="1"/>
</dbReference>
<dbReference type="Pfam" id="PF00164">
    <property type="entry name" value="Ribosom_S12_S23"/>
    <property type="match status" value="1"/>
</dbReference>
<dbReference type="PIRSF" id="PIRSF002133">
    <property type="entry name" value="Ribosomal_S12/S23"/>
    <property type="match status" value="1"/>
</dbReference>
<dbReference type="SUPFAM" id="SSF50249">
    <property type="entry name" value="Nucleic acid-binding proteins"/>
    <property type="match status" value="1"/>
</dbReference>
<dbReference type="PROSITE" id="PS00055">
    <property type="entry name" value="RIBOSOMAL_S12"/>
    <property type="match status" value="1"/>
</dbReference>
<organism>
    <name type="scientific">Natronomonas pharaonis (strain ATCC 35678 / DSM 2160 / CIP 103997 / JCM 8858 / NBRC 14720 / NCIMB 2260 / Gabara)</name>
    <name type="common">Halobacterium pharaonis</name>
    <dbReference type="NCBI Taxonomy" id="348780"/>
    <lineage>
        <taxon>Archaea</taxon>
        <taxon>Methanobacteriati</taxon>
        <taxon>Methanobacteriota</taxon>
        <taxon>Stenosarchaea group</taxon>
        <taxon>Halobacteria</taxon>
        <taxon>Halobacteriales</taxon>
        <taxon>Haloarculaceae</taxon>
        <taxon>Natronomonas</taxon>
    </lineage>
</organism>
<feature type="chain" id="PRO_0000226428" description="Small ribosomal subunit protein uS12">
    <location>
        <begin position="1"/>
        <end position="142"/>
    </location>
</feature>
<feature type="region of interest" description="Disordered" evidence="2">
    <location>
        <begin position="1"/>
        <end position="44"/>
    </location>
</feature>
<feature type="compositionally biased region" description="Basic and acidic residues" evidence="2">
    <location>
        <begin position="11"/>
        <end position="27"/>
    </location>
</feature>
<gene>
    <name evidence="1" type="primary">rps12</name>
    <name type="ordered locus">NP_0122A</name>
</gene>
<name>RS12_NATPD</name>
<sequence>MANGKYAARKLKQDRQKHRWSDSDYARRARGLGKKSDPLEGAPQGRGIVLEKVGIEAKQPNSAIRKCVRVQLIKNGKQVTAFCPGDGAISFIDEHDEVTIAGIGGAKGRAMGDLSGVNYKVEKVNGVSLIELVRGNAEKPVR</sequence>
<proteinExistence type="inferred from homology"/>
<comment type="function">
    <text evidence="1">With S4 and S5 plays an important role in translational accuracy. Located at the interface of the 30S and 50S subunits.</text>
</comment>
<comment type="subunit">
    <text evidence="1">Part of the 30S ribosomal subunit.</text>
</comment>
<comment type="similarity">
    <text evidence="1">Belongs to the universal ribosomal protein uS12 family.</text>
</comment>
<evidence type="ECO:0000255" key="1">
    <source>
        <dbReference type="HAMAP-Rule" id="MF_00403"/>
    </source>
</evidence>
<evidence type="ECO:0000256" key="2">
    <source>
        <dbReference type="SAM" id="MobiDB-lite"/>
    </source>
</evidence>
<evidence type="ECO:0000305" key="3"/>
<protein>
    <recommendedName>
        <fullName evidence="1">Small ribosomal subunit protein uS12</fullName>
    </recommendedName>
    <alternativeName>
        <fullName evidence="3">30S ribosomal protein S12</fullName>
    </alternativeName>
</protein>
<reference key="1">
    <citation type="journal article" date="2005" name="Genome Res.">
        <title>Living with two extremes: conclusions from the genome sequence of Natronomonas pharaonis.</title>
        <authorList>
            <person name="Falb M."/>
            <person name="Pfeiffer F."/>
            <person name="Palm P."/>
            <person name="Rodewald K."/>
            <person name="Hickmann V."/>
            <person name="Tittor J."/>
            <person name="Oesterhelt D."/>
        </authorList>
    </citation>
    <scope>NUCLEOTIDE SEQUENCE [LARGE SCALE GENOMIC DNA]</scope>
    <source>
        <strain>ATCC 35678 / DSM 2160 / CIP 103997 / JCM 8858 / NBRC 14720 / NCIMB 2260 / Gabara</strain>
    </source>
</reference>
<accession>Q3IUM8</accession>
<keyword id="KW-1185">Reference proteome</keyword>
<keyword id="KW-0687">Ribonucleoprotein</keyword>
<keyword id="KW-0689">Ribosomal protein</keyword>
<keyword id="KW-0694">RNA-binding</keyword>
<keyword id="KW-0699">rRNA-binding</keyword>